<feature type="chain" id="PRO_0000171159" description="High-affinity zinc uptake system membrane protein ZnuB">
    <location>
        <begin position="1"/>
        <end position="261"/>
    </location>
</feature>
<feature type="transmembrane region" description="Helical" evidence="2">
    <location>
        <begin position="8"/>
        <end position="28"/>
    </location>
</feature>
<feature type="transmembrane region" description="Helical" evidence="2">
    <location>
        <begin position="54"/>
        <end position="74"/>
    </location>
</feature>
<feature type="transmembrane region" description="Helical" evidence="2">
    <location>
        <begin position="84"/>
        <end position="104"/>
    </location>
</feature>
<feature type="transmembrane region" description="Helical" evidence="2">
    <location>
        <begin position="129"/>
        <end position="149"/>
    </location>
</feature>
<feature type="transmembrane region" description="Helical" evidence="2">
    <location>
        <begin position="179"/>
        <end position="199"/>
    </location>
</feature>
<feature type="transmembrane region" description="Helical" evidence="2">
    <location>
        <begin position="215"/>
        <end position="235"/>
    </location>
</feature>
<feature type="transmembrane region" description="Helical" evidence="2">
    <location>
        <begin position="238"/>
        <end position="254"/>
    </location>
</feature>
<reference key="1">
    <citation type="journal article" date="2002" name="Science">
        <title>50 million years of genomic stasis in endosymbiotic bacteria.</title>
        <authorList>
            <person name="Tamas I."/>
            <person name="Klasson L."/>
            <person name="Canbaeck B."/>
            <person name="Naeslund A.K."/>
            <person name="Eriksson A.-S."/>
            <person name="Wernegreen J.J."/>
            <person name="Sandstroem J.P."/>
            <person name="Moran N.A."/>
            <person name="Andersson S.G.E."/>
        </authorList>
    </citation>
    <scope>NUCLEOTIDE SEQUENCE [LARGE SCALE GENOMIC DNA]</scope>
    <source>
        <strain>Sg</strain>
    </source>
</reference>
<protein>
    <recommendedName>
        <fullName>High-affinity zinc uptake system membrane protein ZnuB</fullName>
    </recommendedName>
</protein>
<organism>
    <name type="scientific">Buchnera aphidicola subsp. Schizaphis graminum (strain Sg)</name>
    <dbReference type="NCBI Taxonomy" id="198804"/>
    <lineage>
        <taxon>Bacteria</taxon>
        <taxon>Pseudomonadati</taxon>
        <taxon>Pseudomonadota</taxon>
        <taxon>Gammaproteobacteria</taxon>
        <taxon>Enterobacterales</taxon>
        <taxon>Erwiniaceae</taxon>
        <taxon>Buchnera</taxon>
    </lineage>
</organism>
<comment type="function">
    <text evidence="1">Involved in the high-affinity zinc uptake transport system.</text>
</comment>
<comment type="subcellular location">
    <subcellularLocation>
        <location evidence="3">Cell membrane</location>
        <topology evidence="3">Multi-pass membrane protein</topology>
    </subcellularLocation>
</comment>
<comment type="similarity">
    <text evidence="3">Belongs to the ABC-3 integral membrane protein family.</text>
</comment>
<accession>Q8K9M7</accession>
<gene>
    <name type="primary">znuB</name>
    <name type="ordered locus">BUsg_307</name>
</gene>
<sequence>MFELIYPGWLAGILLSFATGPLGSFIIWRRISSFGDTLSHSSILGLAISILFQIDSFYTELFFMSFLAIILVWMEQLLSVSLETILSIISHSSLSLGIICISLMSTSHHIDLSNYLFGDLLLVTVFDLCIIALGSLIVLTILFFRWNSILLLTVNEELAQIDGVNIFYARLTLMLTTAICISIAIKFVGVLLITSLLIIPPATAQIFSNSPEKTIGFSILISIISVTGGIFLSFFYNVPTSPSIVLFSSCVYLLSNIKKLI</sequence>
<name>ZNUB_BUCAP</name>
<proteinExistence type="inferred from homology"/>
<dbReference type="EMBL" id="AE013218">
    <property type="protein sequence ID" value="AAM67861.1"/>
    <property type="molecule type" value="Genomic_DNA"/>
</dbReference>
<dbReference type="RefSeq" id="WP_011053828.1">
    <property type="nucleotide sequence ID" value="NC_004061.1"/>
</dbReference>
<dbReference type="SMR" id="Q8K9M7"/>
<dbReference type="STRING" id="198804.BUsg_307"/>
<dbReference type="GeneID" id="93003776"/>
<dbReference type="KEGG" id="bas:BUsg_307"/>
<dbReference type="eggNOG" id="COG1108">
    <property type="taxonomic scope" value="Bacteria"/>
</dbReference>
<dbReference type="HOGENOM" id="CLU_028808_3_2_6"/>
<dbReference type="Proteomes" id="UP000000416">
    <property type="component" value="Chromosome"/>
</dbReference>
<dbReference type="GO" id="GO:0043190">
    <property type="term" value="C:ATP-binding cassette (ABC) transporter complex"/>
    <property type="evidence" value="ECO:0007669"/>
    <property type="project" value="InterPro"/>
</dbReference>
<dbReference type="GO" id="GO:0010043">
    <property type="term" value="P:response to zinc ion"/>
    <property type="evidence" value="ECO:0007669"/>
    <property type="project" value="TreeGrafter"/>
</dbReference>
<dbReference type="GO" id="GO:0055085">
    <property type="term" value="P:transmembrane transport"/>
    <property type="evidence" value="ECO:0007669"/>
    <property type="project" value="InterPro"/>
</dbReference>
<dbReference type="GO" id="GO:0006829">
    <property type="term" value="P:zinc ion transport"/>
    <property type="evidence" value="ECO:0007669"/>
    <property type="project" value="UniProtKB-KW"/>
</dbReference>
<dbReference type="CDD" id="cd06550">
    <property type="entry name" value="TM_ABC_iron-siderophores_like"/>
    <property type="match status" value="1"/>
</dbReference>
<dbReference type="Gene3D" id="1.10.3470.10">
    <property type="entry name" value="ABC transporter involved in vitamin B12 uptake, BtuC"/>
    <property type="match status" value="1"/>
</dbReference>
<dbReference type="InterPro" id="IPR037294">
    <property type="entry name" value="ABC_BtuC-like"/>
</dbReference>
<dbReference type="InterPro" id="IPR001626">
    <property type="entry name" value="ABC_TroCD"/>
</dbReference>
<dbReference type="NCBIfam" id="NF007089">
    <property type="entry name" value="PRK09543.1"/>
    <property type="match status" value="1"/>
</dbReference>
<dbReference type="PANTHER" id="PTHR30477">
    <property type="entry name" value="ABC-TRANSPORTER METAL-BINDING PROTEIN"/>
    <property type="match status" value="1"/>
</dbReference>
<dbReference type="PANTHER" id="PTHR30477:SF23">
    <property type="entry name" value="HIGH-AFFINITY ZINC UPTAKE SYSTEM MEMBRANE PROTEIN ZNUB"/>
    <property type="match status" value="1"/>
</dbReference>
<dbReference type="Pfam" id="PF00950">
    <property type="entry name" value="ABC-3"/>
    <property type="match status" value="1"/>
</dbReference>
<dbReference type="SUPFAM" id="SSF81345">
    <property type="entry name" value="ABC transporter involved in vitamin B12 uptake, BtuC"/>
    <property type="match status" value="1"/>
</dbReference>
<evidence type="ECO:0000250" key="1"/>
<evidence type="ECO:0000255" key="2"/>
<evidence type="ECO:0000305" key="3"/>
<keyword id="KW-1003">Cell membrane</keyword>
<keyword id="KW-0406">Ion transport</keyword>
<keyword id="KW-0472">Membrane</keyword>
<keyword id="KW-0812">Transmembrane</keyword>
<keyword id="KW-1133">Transmembrane helix</keyword>
<keyword id="KW-0813">Transport</keyword>
<keyword id="KW-0862">Zinc</keyword>
<keyword id="KW-0864">Zinc transport</keyword>